<reference key="1">
    <citation type="journal article" date="2003" name="J. Bacteriol.">
        <title>Complete genome sequence of the ammonia-oxidizing bacterium and obligate chemolithoautotroph Nitrosomonas europaea.</title>
        <authorList>
            <person name="Chain P."/>
            <person name="Lamerdin J.E."/>
            <person name="Larimer F.W."/>
            <person name="Regala W."/>
            <person name="Lao V."/>
            <person name="Land M.L."/>
            <person name="Hauser L."/>
            <person name="Hooper A.B."/>
            <person name="Klotz M.G."/>
            <person name="Norton J."/>
            <person name="Sayavedra-Soto L.A."/>
            <person name="Arciero D.M."/>
            <person name="Hommes N.G."/>
            <person name="Whittaker M.M."/>
            <person name="Arp D.J."/>
        </authorList>
    </citation>
    <scope>NUCLEOTIDE SEQUENCE [LARGE SCALE GENOMIC DNA]</scope>
    <source>
        <strain>ATCC 19718 / CIP 103999 / KCTC 2705 / NBRC 14298</strain>
    </source>
</reference>
<proteinExistence type="inferred from homology"/>
<gene>
    <name type="ordered locus">NE0277</name>
</gene>
<protein>
    <recommendedName>
        <fullName evidence="1">dITP/XTP pyrophosphatase</fullName>
        <ecNumber evidence="1">3.6.1.66</ecNumber>
    </recommendedName>
    <alternativeName>
        <fullName evidence="1">Non-canonical purine NTP pyrophosphatase</fullName>
    </alternativeName>
    <alternativeName>
        <fullName evidence="1">Non-standard purine NTP pyrophosphatase</fullName>
    </alternativeName>
    <alternativeName>
        <fullName evidence="1">Nucleoside-triphosphate diphosphatase</fullName>
    </alternativeName>
    <alternativeName>
        <fullName evidence="1">Nucleoside-triphosphate pyrophosphatase</fullName>
        <shortName evidence="1">NTPase</shortName>
    </alternativeName>
</protein>
<accession>Q82XJ3</accession>
<keyword id="KW-0378">Hydrolase</keyword>
<keyword id="KW-0460">Magnesium</keyword>
<keyword id="KW-0479">Metal-binding</keyword>
<keyword id="KW-0546">Nucleotide metabolism</keyword>
<keyword id="KW-0547">Nucleotide-binding</keyword>
<keyword id="KW-1185">Reference proteome</keyword>
<name>IXTPA_NITEU</name>
<feature type="chain" id="PRO_0000178201" description="dITP/XTP pyrophosphatase">
    <location>
        <begin position="1"/>
        <end position="203"/>
    </location>
</feature>
<feature type="active site" description="Proton acceptor" evidence="1">
    <location>
        <position position="69"/>
    </location>
</feature>
<feature type="binding site" evidence="1">
    <location>
        <begin position="8"/>
        <end position="13"/>
    </location>
    <ligand>
        <name>substrate</name>
    </ligand>
</feature>
<feature type="binding site" evidence="1">
    <location>
        <position position="40"/>
    </location>
    <ligand>
        <name>Mg(2+)</name>
        <dbReference type="ChEBI" id="CHEBI:18420"/>
    </ligand>
</feature>
<feature type="binding site" evidence="1">
    <location>
        <position position="69"/>
    </location>
    <ligand>
        <name>Mg(2+)</name>
        <dbReference type="ChEBI" id="CHEBI:18420"/>
    </ligand>
</feature>
<feature type="binding site" evidence="1">
    <location>
        <position position="70"/>
    </location>
    <ligand>
        <name>substrate</name>
    </ligand>
</feature>
<feature type="binding site" evidence="1">
    <location>
        <begin position="152"/>
        <end position="155"/>
    </location>
    <ligand>
        <name>substrate</name>
    </ligand>
</feature>
<feature type="binding site" evidence="1">
    <location>
        <position position="175"/>
    </location>
    <ligand>
        <name>substrate</name>
    </ligand>
</feature>
<feature type="binding site" evidence="1">
    <location>
        <begin position="180"/>
        <end position="181"/>
    </location>
    <ligand>
        <name>substrate</name>
    </ligand>
</feature>
<comment type="function">
    <text evidence="1">Pyrophosphatase that catalyzes the hydrolysis of nucleoside triphosphates to their monophosphate derivatives, with a high preference for the non-canonical purine nucleotides XTP (xanthosine triphosphate), dITP (deoxyinosine triphosphate) and ITP. Seems to function as a house-cleaning enzyme that removes non-canonical purine nucleotides from the nucleotide pool, thus preventing their incorporation into DNA/RNA and avoiding chromosomal lesions.</text>
</comment>
<comment type="catalytic activity">
    <reaction evidence="1">
        <text>XTP + H2O = XMP + diphosphate + H(+)</text>
        <dbReference type="Rhea" id="RHEA:28610"/>
        <dbReference type="ChEBI" id="CHEBI:15377"/>
        <dbReference type="ChEBI" id="CHEBI:15378"/>
        <dbReference type="ChEBI" id="CHEBI:33019"/>
        <dbReference type="ChEBI" id="CHEBI:57464"/>
        <dbReference type="ChEBI" id="CHEBI:61314"/>
        <dbReference type="EC" id="3.6.1.66"/>
    </reaction>
</comment>
<comment type="catalytic activity">
    <reaction evidence="1">
        <text>dITP + H2O = dIMP + diphosphate + H(+)</text>
        <dbReference type="Rhea" id="RHEA:28342"/>
        <dbReference type="ChEBI" id="CHEBI:15377"/>
        <dbReference type="ChEBI" id="CHEBI:15378"/>
        <dbReference type="ChEBI" id="CHEBI:33019"/>
        <dbReference type="ChEBI" id="CHEBI:61194"/>
        <dbReference type="ChEBI" id="CHEBI:61382"/>
        <dbReference type="EC" id="3.6.1.66"/>
    </reaction>
</comment>
<comment type="catalytic activity">
    <reaction evidence="1">
        <text>ITP + H2O = IMP + diphosphate + H(+)</text>
        <dbReference type="Rhea" id="RHEA:29399"/>
        <dbReference type="ChEBI" id="CHEBI:15377"/>
        <dbReference type="ChEBI" id="CHEBI:15378"/>
        <dbReference type="ChEBI" id="CHEBI:33019"/>
        <dbReference type="ChEBI" id="CHEBI:58053"/>
        <dbReference type="ChEBI" id="CHEBI:61402"/>
        <dbReference type="EC" id="3.6.1.66"/>
    </reaction>
</comment>
<comment type="cofactor">
    <cofactor evidence="1">
        <name>Mg(2+)</name>
        <dbReference type="ChEBI" id="CHEBI:18420"/>
    </cofactor>
    <text evidence="1">Binds 1 Mg(2+) ion per subunit.</text>
</comment>
<comment type="subunit">
    <text evidence="1">Homodimer.</text>
</comment>
<comment type="similarity">
    <text evidence="1">Belongs to the HAM1 NTPase family.</text>
</comment>
<evidence type="ECO:0000255" key="1">
    <source>
        <dbReference type="HAMAP-Rule" id="MF_01405"/>
    </source>
</evidence>
<organism>
    <name type="scientific">Nitrosomonas europaea (strain ATCC 19718 / CIP 103999 / KCTC 2705 / NBRC 14298)</name>
    <dbReference type="NCBI Taxonomy" id="228410"/>
    <lineage>
        <taxon>Bacteria</taxon>
        <taxon>Pseudomonadati</taxon>
        <taxon>Pseudomonadota</taxon>
        <taxon>Betaproteobacteria</taxon>
        <taxon>Nitrosomonadales</taxon>
        <taxon>Nitrosomonadaceae</taxon>
        <taxon>Nitrosomonas</taxon>
    </lineage>
</organism>
<sequence length="203" mass="22034">MNKIVIASNNAGKLAEISRLLAPLGIEVVTQSSLGVTEADEPHMTFVENALAKARHASLATGLPALADDSGICVSALRGDPGVFSARYAGEPRSDERNNRKLVEALHGQSDRRAYYYCVIVLLRHGQDPQPVIIEDTWRGEIIAEPIGQGGFGYDPHFFLPELGKTAAELSIEEKNRISHRGKALARLVQMLSENETVPVVPV</sequence>
<dbReference type="EC" id="3.6.1.66" evidence="1"/>
<dbReference type="EMBL" id="AL954747">
    <property type="protein sequence ID" value="CAD84188.1"/>
    <property type="molecule type" value="Genomic_DNA"/>
</dbReference>
<dbReference type="SMR" id="Q82XJ3"/>
<dbReference type="STRING" id="228410.NE0277"/>
<dbReference type="KEGG" id="neu:NE0277"/>
<dbReference type="eggNOG" id="COG0127">
    <property type="taxonomic scope" value="Bacteria"/>
</dbReference>
<dbReference type="HOGENOM" id="CLU_082080_0_3_4"/>
<dbReference type="OrthoDB" id="9807456at2"/>
<dbReference type="PhylomeDB" id="Q82XJ3"/>
<dbReference type="Proteomes" id="UP000001416">
    <property type="component" value="Chromosome"/>
</dbReference>
<dbReference type="GO" id="GO:0005829">
    <property type="term" value="C:cytosol"/>
    <property type="evidence" value="ECO:0007669"/>
    <property type="project" value="TreeGrafter"/>
</dbReference>
<dbReference type="GO" id="GO:0035870">
    <property type="term" value="F:dITP diphosphatase activity"/>
    <property type="evidence" value="ECO:0007669"/>
    <property type="project" value="RHEA"/>
</dbReference>
<dbReference type="GO" id="GO:0036220">
    <property type="term" value="F:ITP diphosphatase activity"/>
    <property type="evidence" value="ECO:0007669"/>
    <property type="project" value="UniProtKB-EC"/>
</dbReference>
<dbReference type="GO" id="GO:0046872">
    <property type="term" value="F:metal ion binding"/>
    <property type="evidence" value="ECO:0007669"/>
    <property type="project" value="UniProtKB-KW"/>
</dbReference>
<dbReference type="GO" id="GO:0000166">
    <property type="term" value="F:nucleotide binding"/>
    <property type="evidence" value="ECO:0007669"/>
    <property type="project" value="UniProtKB-KW"/>
</dbReference>
<dbReference type="GO" id="GO:0017111">
    <property type="term" value="F:ribonucleoside triphosphate phosphatase activity"/>
    <property type="evidence" value="ECO:0007669"/>
    <property type="project" value="InterPro"/>
</dbReference>
<dbReference type="GO" id="GO:0036222">
    <property type="term" value="F:XTP diphosphatase activity"/>
    <property type="evidence" value="ECO:0007669"/>
    <property type="project" value="RHEA"/>
</dbReference>
<dbReference type="GO" id="GO:0009117">
    <property type="term" value="P:nucleotide metabolic process"/>
    <property type="evidence" value="ECO:0007669"/>
    <property type="project" value="UniProtKB-KW"/>
</dbReference>
<dbReference type="GO" id="GO:0009146">
    <property type="term" value="P:purine nucleoside triphosphate catabolic process"/>
    <property type="evidence" value="ECO:0007669"/>
    <property type="project" value="UniProtKB-UniRule"/>
</dbReference>
<dbReference type="CDD" id="cd00515">
    <property type="entry name" value="HAM1"/>
    <property type="match status" value="1"/>
</dbReference>
<dbReference type="FunFam" id="3.90.950.10:FF:000001">
    <property type="entry name" value="dITP/XTP pyrophosphatase"/>
    <property type="match status" value="1"/>
</dbReference>
<dbReference type="Gene3D" id="3.90.950.10">
    <property type="match status" value="1"/>
</dbReference>
<dbReference type="HAMAP" id="MF_01405">
    <property type="entry name" value="Non_canon_purine_NTPase"/>
    <property type="match status" value="1"/>
</dbReference>
<dbReference type="InterPro" id="IPR020922">
    <property type="entry name" value="dITP/XTP_pyrophosphatase"/>
</dbReference>
<dbReference type="InterPro" id="IPR029001">
    <property type="entry name" value="ITPase-like_fam"/>
</dbReference>
<dbReference type="InterPro" id="IPR002637">
    <property type="entry name" value="RdgB/HAM1"/>
</dbReference>
<dbReference type="NCBIfam" id="TIGR00042">
    <property type="entry name" value="RdgB/HAM1 family non-canonical purine NTP pyrophosphatase"/>
    <property type="match status" value="1"/>
</dbReference>
<dbReference type="PANTHER" id="PTHR11067:SF9">
    <property type="entry name" value="INOSINE TRIPHOSPHATE PYROPHOSPHATASE"/>
    <property type="match status" value="1"/>
</dbReference>
<dbReference type="PANTHER" id="PTHR11067">
    <property type="entry name" value="INOSINE TRIPHOSPHATE PYROPHOSPHATASE/HAM1 PROTEIN"/>
    <property type="match status" value="1"/>
</dbReference>
<dbReference type="Pfam" id="PF01725">
    <property type="entry name" value="Ham1p_like"/>
    <property type="match status" value="1"/>
</dbReference>
<dbReference type="SUPFAM" id="SSF52972">
    <property type="entry name" value="ITPase-like"/>
    <property type="match status" value="1"/>
</dbReference>